<evidence type="ECO:0000255" key="1">
    <source>
        <dbReference type="HAMAP-Rule" id="MF_01849"/>
    </source>
</evidence>
<evidence type="ECO:0000255" key="2">
    <source>
        <dbReference type="PROSITE-ProRule" id="PRU01266"/>
    </source>
</evidence>
<accession>A1W574</accession>
<dbReference type="EC" id="2.1.1.192" evidence="1"/>
<dbReference type="EMBL" id="CP000539">
    <property type="protein sequence ID" value="ABM41399.1"/>
    <property type="molecule type" value="Genomic_DNA"/>
</dbReference>
<dbReference type="SMR" id="A1W574"/>
<dbReference type="STRING" id="232721.Ajs_1167"/>
<dbReference type="KEGG" id="ajs:Ajs_1167"/>
<dbReference type="eggNOG" id="COG0820">
    <property type="taxonomic scope" value="Bacteria"/>
</dbReference>
<dbReference type="HOGENOM" id="CLU_029101_0_0_4"/>
<dbReference type="Proteomes" id="UP000000645">
    <property type="component" value="Chromosome"/>
</dbReference>
<dbReference type="GO" id="GO:0005737">
    <property type="term" value="C:cytoplasm"/>
    <property type="evidence" value="ECO:0007669"/>
    <property type="project" value="UniProtKB-SubCell"/>
</dbReference>
<dbReference type="GO" id="GO:0051539">
    <property type="term" value="F:4 iron, 4 sulfur cluster binding"/>
    <property type="evidence" value="ECO:0007669"/>
    <property type="project" value="UniProtKB-UniRule"/>
</dbReference>
<dbReference type="GO" id="GO:0046872">
    <property type="term" value="F:metal ion binding"/>
    <property type="evidence" value="ECO:0007669"/>
    <property type="project" value="UniProtKB-KW"/>
</dbReference>
<dbReference type="GO" id="GO:0070040">
    <property type="term" value="F:rRNA (adenine(2503)-C2-)-methyltransferase activity"/>
    <property type="evidence" value="ECO:0007669"/>
    <property type="project" value="UniProtKB-UniRule"/>
</dbReference>
<dbReference type="GO" id="GO:0019843">
    <property type="term" value="F:rRNA binding"/>
    <property type="evidence" value="ECO:0007669"/>
    <property type="project" value="UniProtKB-UniRule"/>
</dbReference>
<dbReference type="GO" id="GO:0002935">
    <property type="term" value="F:tRNA (adenine(37)-C2)-methyltransferase activity"/>
    <property type="evidence" value="ECO:0007669"/>
    <property type="project" value="UniProtKB-UniRule"/>
</dbReference>
<dbReference type="GO" id="GO:0000049">
    <property type="term" value="F:tRNA binding"/>
    <property type="evidence" value="ECO:0007669"/>
    <property type="project" value="UniProtKB-UniRule"/>
</dbReference>
<dbReference type="GO" id="GO:0070475">
    <property type="term" value="P:rRNA base methylation"/>
    <property type="evidence" value="ECO:0007669"/>
    <property type="project" value="UniProtKB-UniRule"/>
</dbReference>
<dbReference type="GO" id="GO:0030488">
    <property type="term" value="P:tRNA methylation"/>
    <property type="evidence" value="ECO:0007669"/>
    <property type="project" value="UniProtKB-UniRule"/>
</dbReference>
<dbReference type="CDD" id="cd01335">
    <property type="entry name" value="Radical_SAM"/>
    <property type="match status" value="1"/>
</dbReference>
<dbReference type="FunFam" id="1.10.150.530:FF:000003">
    <property type="entry name" value="Dual-specificity RNA methyltransferase RlmN"/>
    <property type="match status" value="1"/>
</dbReference>
<dbReference type="FunFam" id="3.20.20.70:FF:000008">
    <property type="entry name" value="Dual-specificity RNA methyltransferase RlmN"/>
    <property type="match status" value="1"/>
</dbReference>
<dbReference type="Gene3D" id="1.10.150.530">
    <property type="match status" value="1"/>
</dbReference>
<dbReference type="Gene3D" id="3.20.20.70">
    <property type="entry name" value="Aldolase class I"/>
    <property type="match status" value="1"/>
</dbReference>
<dbReference type="HAMAP" id="MF_01849">
    <property type="entry name" value="RNA_methyltr_RlmN"/>
    <property type="match status" value="1"/>
</dbReference>
<dbReference type="InterPro" id="IPR013785">
    <property type="entry name" value="Aldolase_TIM"/>
</dbReference>
<dbReference type="InterPro" id="IPR040072">
    <property type="entry name" value="Methyltransferase_A"/>
</dbReference>
<dbReference type="InterPro" id="IPR048641">
    <property type="entry name" value="RlmN_N"/>
</dbReference>
<dbReference type="InterPro" id="IPR027492">
    <property type="entry name" value="RNA_MTrfase_RlmN"/>
</dbReference>
<dbReference type="InterPro" id="IPR004383">
    <property type="entry name" value="rRNA_lsu_MTrfase_RlmN/Cfr"/>
</dbReference>
<dbReference type="InterPro" id="IPR007197">
    <property type="entry name" value="rSAM"/>
</dbReference>
<dbReference type="NCBIfam" id="TIGR00048">
    <property type="entry name" value="rRNA_mod_RlmN"/>
    <property type="match status" value="1"/>
</dbReference>
<dbReference type="PANTHER" id="PTHR30544">
    <property type="entry name" value="23S RRNA METHYLTRANSFERASE"/>
    <property type="match status" value="1"/>
</dbReference>
<dbReference type="PANTHER" id="PTHR30544:SF5">
    <property type="entry name" value="RADICAL SAM CORE DOMAIN-CONTAINING PROTEIN"/>
    <property type="match status" value="1"/>
</dbReference>
<dbReference type="Pfam" id="PF04055">
    <property type="entry name" value="Radical_SAM"/>
    <property type="match status" value="1"/>
</dbReference>
<dbReference type="Pfam" id="PF21016">
    <property type="entry name" value="RlmN_N"/>
    <property type="match status" value="1"/>
</dbReference>
<dbReference type="PIRSF" id="PIRSF006004">
    <property type="entry name" value="CHP00048"/>
    <property type="match status" value="1"/>
</dbReference>
<dbReference type="SFLD" id="SFLDF00275">
    <property type="entry name" value="adenosine_C2_methyltransferase"/>
    <property type="match status" value="1"/>
</dbReference>
<dbReference type="SFLD" id="SFLDG01062">
    <property type="entry name" value="methyltransferase_(Class_A)"/>
    <property type="match status" value="1"/>
</dbReference>
<dbReference type="SUPFAM" id="SSF102114">
    <property type="entry name" value="Radical SAM enzymes"/>
    <property type="match status" value="1"/>
</dbReference>
<dbReference type="PROSITE" id="PS51918">
    <property type="entry name" value="RADICAL_SAM"/>
    <property type="match status" value="1"/>
</dbReference>
<organism>
    <name type="scientific">Acidovorax sp. (strain JS42)</name>
    <dbReference type="NCBI Taxonomy" id="232721"/>
    <lineage>
        <taxon>Bacteria</taxon>
        <taxon>Pseudomonadati</taxon>
        <taxon>Pseudomonadota</taxon>
        <taxon>Betaproteobacteria</taxon>
        <taxon>Burkholderiales</taxon>
        <taxon>Comamonadaceae</taxon>
        <taxon>Acidovorax</taxon>
    </lineage>
</organism>
<gene>
    <name evidence="1" type="primary">rlmN</name>
    <name type="ordered locus">Ajs_1167</name>
</gene>
<comment type="function">
    <text evidence="1">Specifically methylates position 2 of adenine 2503 in 23S rRNA and position 2 of adenine 37 in tRNAs. m2A2503 modification seems to play a crucial role in the proofreading step occurring at the peptidyl transferase center and thus would serve to optimize ribosomal fidelity.</text>
</comment>
<comment type="catalytic activity">
    <reaction evidence="1">
        <text>adenosine(2503) in 23S rRNA + 2 reduced [2Fe-2S]-[ferredoxin] + 2 S-adenosyl-L-methionine = 2-methyladenosine(2503) in 23S rRNA + 5'-deoxyadenosine + L-methionine + 2 oxidized [2Fe-2S]-[ferredoxin] + S-adenosyl-L-homocysteine</text>
        <dbReference type="Rhea" id="RHEA:42916"/>
        <dbReference type="Rhea" id="RHEA-COMP:10000"/>
        <dbReference type="Rhea" id="RHEA-COMP:10001"/>
        <dbReference type="Rhea" id="RHEA-COMP:10152"/>
        <dbReference type="Rhea" id="RHEA-COMP:10282"/>
        <dbReference type="ChEBI" id="CHEBI:17319"/>
        <dbReference type="ChEBI" id="CHEBI:33737"/>
        <dbReference type="ChEBI" id="CHEBI:33738"/>
        <dbReference type="ChEBI" id="CHEBI:57844"/>
        <dbReference type="ChEBI" id="CHEBI:57856"/>
        <dbReference type="ChEBI" id="CHEBI:59789"/>
        <dbReference type="ChEBI" id="CHEBI:74411"/>
        <dbReference type="ChEBI" id="CHEBI:74497"/>
        <dbReference type="EC" id="2.1.1.192"/>
    </reaction>
</comment>
<comment type="catalytic activity">
    <reaction evidence="1">
        <text>adenosine(37) in tRNA + 2 reduced [2Fe-2S]-[ferredoxin] + 2 S-adenosyl-L-methionine = 2-methyladenosine(37) in tRNA + 5'-deoxyadenosine + L-methionine + 2 oxidized [2Fe-2S]-[ferredoxin] + S-adenosyl-L-homocysteine</text>
        <dbReference type="Rhea" id="RHEA:43332"/>
        <dbReference type="Rhea" id="RHEA-COMP:10000"/>
        <dbReference type="Rhea" id="RHEA-COMP:10001"/>
        <dbReference type="Rhea" id="RHEA-COMP:10162"/>
        <dbReference type="Rhea" id="RHEA-COMP:10485"/>
        <dbReference type="ChEBI" id="CHEBI:17319"/>
        <dbReference type="ChEBI" id="CHEBI:33737"/>
        <dbReference type="ChEBI" id="CHEBI:33738"/>
        <dbReference type="ChEBI" id="CHEBI:57844"/>
        <dbReference type="ChEBI" id="CHEBI:57856"/>
        <dbReference type="ChEBI" id="CHEBI:59789"/>
        <dbReference type="ChEBI" id="CHEBI:74411"/>
        <dbReference type="ChEBI" id="CHEBI:74497"/>
        <dbReference type="EC" id="2.1.1.192"/>
    </reaction>
</comment>
<comment type="cofactor">
    <cofactor evidence="1">
        <name>[4Fe-4S] cluster</name>
        <dbReference type="ChEBI" id="CHEBI:49883"/>
    </cofactor>
    <text evidence="1">Binds 1 [4Fe-4S] cluster. The cluster is coordinated with 3 cysteines and an exchangeable S-adenosyl-L-methionine.</text>
</comment>
<comment type="subcellular location">
    <subcellularLocation>
        <location evidence="1">Cytoplasm</location>
    </subcellularLocation>
</comment>
<comment type="miscellaneous">
    <text evidence="1">Reaction proceeds by a ping-pong mechanism involving intermediate methylation of a conserved cysteine residue.</text>
</comment>
<comment type="similarity">
    <text evidence="1">Belongs to the radical SAM superfamily. RlmN family.</text>
</comment>
<feature type="chain" id="PRO_0000349996" description="Dual-specificity RNA methyltransferase RlmN">
    <location>
        <begin position="1"/>
        <end position="374"/>
    </location>
</feature>
<feature type="domain" description="Radical SAM core" evidence="2">
    <location>
        <begin position="97"/>
        <end position="340"/>
    </location>
</feature>
<feature type="active site" description="Proton acceptor" evidence="1">
    <location>
        <position position="91"/>
    </location>
</feature>
<feature type="active site" description="S-methylcysteine intermediate" evidence="1">
    <location>
        <position position="345"/>
    </location>
</feature>
<feature type="binding site" evidence="1">
    <location>
        <position position="111"/>
    </location>
    <ligand>
        <name>[4Fe-4S] cluster</name>
        <dbReference type="ChEBI" id="CHEBI:49883"/>
        <note>4Fe-4S-S-AdoMet</note>
    </ligand>
</feature>
<feature type="binding site" evidence="1">
    <location>
        <position position="115"/>
    </location>
    <ligand>
        <name>[4Fe-4S] cluster</name>
        <dbReference type="ChEBI" id="CHEBI:49883"/>
        <note>4Fe-4S-S-AdoMet</note>
    </ligand>
</feature>
<feature type="binding site" evidence="1">
    <location>
        <position position="118"/>
    </location>
    <ligand>
        <name>[4Fe-4S] cluster</name>
        <dbReference type="ChEBI" id="CHEBI:49883"/>
        <note>4Fe-4S-S-AdoMet</note>
    </ligand>
</feature>
<feature type="binding site" evidence="1">
    <location>
        <begin position="165"/>
        <end position="166"/>
    </location>
    <ligand>
        <name>S-adenosyl-L-methionine</name>
        <dbReference type="ChEBI" id="CHEBI:59789"/>
    </ligand>
</feature>
<feature type="binding site" evidence="1">
    <location>
        <position position="197"/>
    </location>
    <ligand>
        <name>S-adenosyl-L-methionine</name>
        <dbReference type="ChEBI" id="CHEBI:59789"/>
    </ligand>
</feature>
<feature type="binding site" evidence="1">
    <location>
        <begin position="219"/>
        <end position="221"/>
    </location>
    <ligand>
        <name>S-adenosyl-L-methionine</name>
        <dbReference type="ChEBI" id="CHEBI:59789"/>
    </ligand>
</feature>
<feature type="binding site" evidence="1">
    <location>
        <position position="302"/>
    </location>
    <ligand>
        <name>S-adenosyl-L-methionine</name>
        <dbReference type="ChEBI" id="CHEBI:59789"/>
    </ligand>
</feature>
<feature type="disulfide bond" description="(transient)" evidence="1">
    <location>
        <begin position="104"/>
        <end position="345"/>
    </location>
</feature>
<keyword id="KW-0004">4Fe-4S</keyword>
<keyword id="KW-0963">Cytoplasm</keyword>
<keyword id="KW-1015">Disulfide bond</keyword>
<keyword id="KW-0408">Iron</keyword>
<keyword id="KW-0411">Iron-sulfur</keyword>
<keyword id="KW-0479">Metal-binding</keyword>
<keyword id="KW-0489">Methyltransferase</keyword>
<keyword id="KW-0698">rRNA processing</keyword>
<keyword id="KW-0949">S-adenosyl-L-methionine</keyword>
<keyword id="KW-0808">Transferase</keyword>
<keyword id="KW-0819">tRNA processing</keyword>
<proteinExistence type="inferred from homology"/>
<protein>
    <recommendedName>
        <fullName evidence="1">Dual-specificity RNA methyltransferase RlmN</fullName>
        <ecNumber evidence="1">2.1.1.192</ecNumber>
    </recommendedName>
    <alternativeName>
        <fullName evidence="1">23S rRNA (adenine(2503)-C(2))-methyltransferase</fullName>
    </alternativeName>
    <alternativeName>
        <fullName evidence="1">23S rRNA m2A2503 methyltransferase</fullName>
    </alternativeName>
    <alternativeName>
        <fullName evidence="1">Ribosomal RNA large subunit methyltransferase N</fullName>
    </alternativeName>
    <alternativeName>
        <fullName evidence="1">tRNA (adenine(37)-C(2))-methyltransferase</fullName>
    </alternativeName>
    <alternativeName>
        <fullName evidence="1">tRNA m2A37 methyltransferase</fullName>
    </alternativeName>
</protein>
<reference key="1">
    <citation type="submission" date="2006-12" db="EMBL/GenBank/DDBJ databases">
        <title>Complete sequence of chromosome 1 of Acidovorax sp. JS42.</title>
        <authorList>
            <person name="Copeland A."/>
            <person name="Lucas S."/>
            <person name="Lapidus A."/>
            <person name="Barry K."/>
            <person name="Detter J.C."/>
            <person name="Glavina del Rio T."/>
            <person name="Dalin E."/>
            <person name="Tice H."/>
            <person name="Pitluck S."/>
            <person name="Chertkov O."/>
            <person name="Brettin T."/>
            <person name="Bruce D."/>
            <person name="Han C."/>
            <person name="Tapia R."/>
            <person name="Gilna P."/>
            <person name="Schmutz J."/>
            <person name="Larimer F."/>
            <person name="Land M."/>
            <person name="Hauser L."/>
            <person name="Kyrpides N."/>
            <person name="Kim E."/>
            <person name="Stahl D."/>
            <person name="Richardson P."/>
        </authorList>
    </citation>
    <scope>NUCLEOTIDE SEQUENCE [LARGE SCALE GENOMIC DNA]</scope>
    <source>
        <strain>JS42</strain>
    </source>
</reference>
<sequence length="374" mass="41207">MTTNLLDFDLDGLAAFCERLGEKRFRATQLFRWIHQRGASDFDQMSDLAKSLREKLRGCAHVAGLQAISEHVSADGTVKWLFDVGDGNAVETVFIPEDDRGTLCISSQAGCAVGCRFCSTGHQGFSRNLTTGEILAQLWYAEHALRQRRGDGERVISNVVMMGMGEPLQNYAALVPALRVMLDDHGYGLSRRRVTVSTSGVVPMMDRLAQDCPVALAVSLHAPNDVLRDNLVPLNRKYPLHELLAACRRYLDHAPRDFITFEYCMLEGVNDQPEHARQLIDLVGRKAADGGVSCKFNLIPFNPFPASGLRRSPPAAVTAFAQLLSDAGIVTTVRKTRGDDIDAACGQLAGDVKDRTRVNERMAKLRTIEIKPVI</sequence>
<name>RLMN_ACISJ</name>